<name>LALBA_BOSMU</name>
<keyword id="KW-0106">Calcium</keyword>
<keyword id="KW-1015">Disulfide bond</keyword>
<keyword id="KW-0325">Glycoprotein</keyword>
<keyword id="KW-0422">Lactose biosynthesis</keyword>
<keyword id="KW-0479">Metal-binding</keyword>
<keyword id="KW-0494">Milk protein</keyword>
<keyword id="KW-1185">Reference proteome</keyword>
<keyword id="KW-0964">Secreted</keyword>
<keyword id="KW-0732">Signal</keyword>
<sequence>MMSFVSLLLVGILFHATQAEQLTKCEVFRELKDLKGYGGVSLPEWVCTTFHTSGYDTQAIVQNNDSTEYGLFQINNKIWCKDDQNPHSSDICNISCDKFLDDDLTDDIMCVKKILDKVGINYWLAHKALCSEKLDQWLCEKL</sequence>
<gene>
    <name type="primary">LALBA</name>
</gene>
<organism>
    <name type="scientific">Bos mutus grunniens</name>
    <name type="common">Wild yak</name>
    <name type="synonym">Bos grunniens</name>
    <dbReference type="NCBI Taxonomy" id="30521"/>
    <lineage>
        <taxon>Eukaryota</taxon>
        <taxon>Metazoa</taxon>
        <taxon>Chordata</taxon>
        <taxon>Craniata</taxon>
        <taxon>Vertebrata</taxon>
        <taxon>Euteleostomi</taxon>
        <taxon>Mammalia</taxon>
        <taxon>Eutheria</taxon>
        <taxon>Laurasiatheria</taxon>
        <taxon>Artiodactyla</taxon>
        <taxon>Ruminantia</taxon>
        <taxon>Pecora</taxon>
        <taxon>Bovidae</taxon>
        <taxon>Bovinae</taxon>
        <taxon>Bos</taxon>
    </lineage>
</organism>
<comment type="function">
    <text>Regulatory subunit of lactose synthase, changes the substrate specificity of galactosyltransferase in the mammary gland making glucose a good acceptor substrate for this enzyme. This enables LS to synthesize lactose, the major carbohydrate component of milk. In other tissues, galactosyltransferase transfers galactose onto the N-acetylglucosamine of the oligosaccharide chains in glycoproteins.</text>
</comment>
<comment type="subunit">
    <text>Lactose synthase (LS) is a heterodimer of a catalytic component, beta1,4-galactosyltransferase (beta4Gal-T1) and a regulatory component, alpha-lactalbumin (LA).</text>
</comment>
<comment type="subcellular location">
    <subcellularLocation>
        <location>Secreted</location>
    </subcellularLocation>
</comment>
<comment type="tissue specificity">
    <text>Mammary gland specific. Secreted in milk.</text>
</comment>
<comment type="similarity">
    <text evidence="4">Belongs to the glycosyl hydrolase 22 family.</text>
</comment>
<reference key="1">
    <citation type="journal article" date="2000" name="Yi Chuan Xue Bao">
        <title>Research on constructing phylogenetics trees of ruminants basing on the database of milk protein gene sequences.</title>
        <authorList>
            <person name="Fan B.L."/>
            <person name="Li N."/>
            <person name="Wu C.X."/>
        </authorList>
    </citation>
    <scope>NUCLEOTIDE SEQUENCE [GENOMIC DNA]</scope>
</reference>
<dbReference type="EMBL" id="AF194372">
    <property type="protein sequence ID" value="AAF06793.1"/>
    <property type="molecule type" value="Genomic_DNA"/>
</dbReference>
<dbReference type="BMRB" id="Q9TSR4"/>
<dbReference type="SMR" id="Q9TSR4"/>
<dbReference type="GlyCosmos" id="Q9TSR4">
    <property type="glycosylation" value="2 sites, No reported glycans"/>
</dbReference>
<dbReference type="Proteomes" id="UP000694520">
    <property type="component" value="Unplaced"/>
</dbReference>
<dbReference type="GO" id="GO:0005576">
    <property type="term" value="C:extracellular region"/>
    <property type="evidence" value="ECO:0007669"/>
    <property type="project" value="UniProtKB-SubCell"/>
</dbReference>
<dbReference type="GO" id="GO:0005509">
    <property type="term" value="F:calcium ion binding"/>
    <property type="evidence" value="ECO:0007669"/>
    <property type="project" value="InterPro"/>
</dbReference>
<dbReference type="GO" id="GO:0004461">
    <property type="term" value="F:lactose synthase activity"/>
    <property type="evidence" value="ECO:0007669"/>
    <property type="project" value="InterPro"/>
</dbReference>
<dbReference type="GO" id="GO:0003796">
    <property type="term" value="F:lysozyme activity"/>
    <property type="evidence" value="ECO:0007669"/>
    <property type="project" value="TreeGrafter"/>
</dbReference>
<dbReference type="GO" id="GO:0050829">
    <property type="term" value="P:defense response to Gram-negative bacterium"/>
    <property type="evidence" value="ECO:0007669"/>
    <property type="project" value="TreeGrafter"/>
</dbReference>
<dbReference type="GO" id="GO:0050830">
    <property type="term" value="P:defense response to Gram-positive bacterium"/>
    <property type="evidence" value="ECO:0007669"/>
    <property type="project" value="TreeGrafter"/>
</dbReference>
<dbReference type="GO" id="GO:0005989">
    <property type="term" value="P:lactose biosynthetic process"/>
    <property type="evidence" value="ECO:0007669"/>
    <property type="project" value="UniProtKB-KW"/>
</dbReference>
<dbReference type="CDD" id="cd16898">
    <property type="entry name" value="LYZ_LA"/>
    <property type="match status" value="1"/>
</dbReference>
<dbReference type="FunFam" id="1.10.530.10:FF:000014">
    <property type="entry name" value="Alpha-lactalbumin"/>
    <property type="match status" value="1"/>
</dbReference>
<dbReference type="Gene3D" id="1.10.530.10">
    <property type="match status" value="1"/>
</dbReference>
<dbReference type="InterPro" id="IPR001916">
    <property type="entry name" value="Glyco_hydro_22"/>
</dbReference>
<dbReference type="InterPro" id="IPR019799">
    <property type="entry name" value="Glyco_hydro_22_CS"/>
</dbReference>
<dbReference type="InterPro" id="IPR000545">
    <property type="entry name" value="Lactalbumin"/>
</dbReference>
<dbReference type="InterPro" id="IPR023346">
    <property type="entry name" value="Lysozyme-like_dom_sf"/>
</dbReference>
<dbReference type="PANTHER" id="PTHR11407:SF32">
    <property type="entry name" value="ALPHA-LACTALBUMIN"/>
    <property type="match status" value="1"/>
</dbReference>
<dbReference type="PANTHER" id="PTHR11407">
    <property type="entry name" value="LYSOZYME C"/>
    <property type="match status" value="1"/>
</dbReference>
<dbReference type="Pfam" id="PF00062">
    <property type="entry name" value="Lys"/>
    <property type="match status" value="1"/>
</dbReference>
<dbReference type="PRINTS" id="PR00136">
    <property type="entry name" value="LACTALBUMIN"/>
</dbReference>
<dbReference type="PRINTS" id="PR00135">
    <property type="entry name" value="LYZLACT"/>
</dbReference>
<dbReference type="SMART" id="SM00263">
    <property type="entry name" value="LYZ1"/>
    <property type="match status" value="1"/>
</dbReference>
<dbReference type="SUPFAM" id="SSF53955">
    <property type="entry name" value="Lysozyme-like"/>
    <property type="match status" value="1"/>
</dbReference>
<dbReference type="PROSITE" id="PS00128">
    <property type="entry name" value="GLYCOSYL_HYDROL_F22_1"/>
    <property type="match status" value="1"/>
</dbReference>
<dbReference type="PROSITE" id="PS51348">
    <property type="entry name" value="GLYCOSYL_HYDROL_F22_2"/>
    <property type="match status" value="1"/>
</dbReference>
<protein>
    <recommendedName>
        <fullName>Alpha-lactalbumin</fullName>
    </recommendedName>
    <alternativeName>
        <fullName>Lactose synthase B protein</fullName>
    </alternativeName>
</protein>
<accession>Q9TSR4</accession>
<evidence type="ECO:0000250" key="1"/>
<evidence type="ECO:0000250" key="2">
    <source>
        <dbReference type="UniProtKB" id="P00711"/>
    </source>
</evidence>
<evidence type="ECO:0000255" key="3"/>
<evidence type="ECO:0000255" key="4">
    <source>
        <dbReference type="PROSITE-ProRule" id="PRU00680"/>
    </source>
</evidence>
<feature type="signal peptide" evidence="1">
    <location>
        <begin position="1"/>
        <end position="19"/>
    </location>
</feature>
<feature type="chain" id="PRO_0000018438" description="Alpha-lactalbumin">
    <location>
        <begin position="20"/>
        <end position="142"/>
    </location>
</feature>
<feature type="domain" description="C-type lysozyme" evidence="4">
    <location>
        <begin position="20"/>
        <end position="142"/>
    </location>
</feature>
<feature type="binding site" evidence="2">
    <location>
        <position position="98"/>
    </location>
    <ligand>
        <name>Ca(2+)</name>
        <dbReference type="ChEBI" id="CHEBI:29108"/>
    </ligand>
</feature>
<feature type="binding site" evidence="2">
    <location>
        <position position="101"/>
    </location>
    <ligand>
        <name>Ca(2+)</name>
        <dbReference type="ChEBI" id="CHEBI:29108"/>
    </ligand>
</feature>
<feature type="binding site" evidence="2">
    <location>
        <position position="103"/>
    </location>
    <ligand>
        <name>Ca(2+)</name>
        <dbReference type="ChEBI" id="CHEBI:29108"/>
    </ligand>
</feature>
<feature type="binding site" evidence="2">
    <location>
        <position position="106"/>
    </location>
    <ligand>
        <name>Ca(2+)</name>
        <dbReference type="ChEBI" id="CHEBI:29108"/>
    </ligand>
</feature>
<feature type="binding site" evidence="2">
    <location>
        <position position="107"/>
    </location>
    <ligand>
        <name>Ca(2+)</name>
        <dbReference type="ChEBI" id="CHEBI:29108"/>
    </ligand>
</feature>
<feature type="glycosylation site" description="N-linked (GlcNAc...) asparagine" evidence="3">
    <location>
        <position position="64"/>
    </location>
</feature>
<feature type="glycosylation site" description="N-linked (GlcNAc...) asparagine" evidence="3">
    <location>
        <position position="93"/>
    </location>
</feature>
<feature type="disulfide bond" evidence="4">
    <location>
        <begin position="25"/>
        <end position="139"/>
    </location>
</feature>
<feature type="disulfide bond" evidence="4">
    <location>
        <begin position="47"/>
        <end position="130"/>
    </location>
</feature>
<feature type="disulfide bond" evidence="4">
    <location>
        <begin position="80"/>
        <end position="96"/>
    </location>
</feature>
<feature type="disulfide bond" evidence="4">
    <location>
        <begin position="92"/>
        <end position="110"/>
    </location>
</feature>
<proteinExistence type="evidence at transcript level"/>